<reference key="1">
    <citation type="journal article" date="2002" name="Science">
        <title>50 million years of genomic stasis in endosymbiotic bacteria.</title>
        <authorList>
            <person name="Tamas I."/>
            <person name="Klasson L."/>
            <person name="Canbaeck B."/>
            <person name="Naeslund A.K."/>
            <person name="Eriksson A.-S."/>
            <person name="Wernegreen J.J."/>
            <person name="Sandstroem J.P."/>
            <person name="Moran N.A."/>
            <person name="Andersson S.G.E."/>
        </authorList>
    </citation>
    <scope>NUCLEOTIDE SEQUENCE [LARGE SCALE GENOMIC DNA]</scope>
    <source>
        <strain>Sg</strain>
    </source>
</reference>
<accession>Q8K9I5</accession>
<sequence length="336" mass="38101">MFYYLIRKLLFLIDPEKAHTLVLMYLNSKKIQILRKIFIKPIPLKQIKCMGLTFNNKIGLAAGMDKNGDYIDSLSKIGFGFIEVGTVTPLPQYGNPKPRIFRVPSIEGIINRMGFNNLGIDYLVNNVKKSKFKGIIGINIGKNKDTKIEDAIKDYLICIEKIYFYASYIAINISSPNTINLRKLQYGILFENLLRDIKKKQSEMHSKYSKYVPIVIKISPDLSKKELIHISNKLIHYKIDGVIATNTTLDHSSIPKIKNNKEEGGLSGLPLQKKSNDVISILYKNLKRKIPIIGVGGINSINSAREKIMCGANLIQVYSGLIYHGPNFIREIIRNL</sequence>
<dbReference type="EC" id="1.3.5.2" evidence="1"/>
<dbReference type="EMBL" id="AE013218">
    <property type="protein sequence ID" value="AAM67903.1"/>
    <property type="molecule type" value="Genomic_DNA"/>
</dbReference>
<dbReference type="RefSeq" id="WP_011053870.1">
    <property type="nucleotide sequence ID" value="NC_004061.1"/>
</dbReference>
<dbReference type="SMR" id="Q8K9I5"/>
<dbReference type="STRING" id="198804.BUsg_350"/>
<dbReference type="GeneID" id="93003820"/>
<dbReference type="KEGG" id="bas:BUsg_350"/>
<dbReference type="eggNOG" id="COG0167">
    <property type="taxonomic scope" value="Bacteria"/>
</dbReference>
<dbReference type="HOGENOM" id="CLU_013640_2_0_6"/>
<dbReference type="UniPathway" id="UPA00070">
    <property type="reaction ID" value="UER00946"/>
</dbReference>
<dbReference type="Proteomes" id="UP000000416">
    <property type="component" value="Chromosome"/>
</dbReference>
<dbReference type="GO" id="GO:0005737">
    <property type="term" value="C:cytoplasm"/>
    <property type="evidence" value="ECO:0007669"/>
    <property type="project" value="InterPro"/>
</dbReference>
<dbReference type="GO" id="GO:0005886">
    <property type="term" value="C:plasma membrane"/>
    <property type="evidence" value="ECO:0007669"/>
    <property type="project" value="UniProtKB-SubCell"/>
</dbReference>
<dbReference type="GO" id="GO:0106430">
    <property type="term" value="F:dihydroorotate dehydrogenase (quinone) activity"/>
    <property type="evidence" value="ECO:0007669"/>
    <property type="project" value="UniProtKB-EC"/>
</dbReference>
<dbReference type="GO" id="GO:0006207">
    <property type="term" value="P:'de novo' pyrimidine nucleobase biosynthetic process"/>
    <property type="evidence" value="ECO:0007669"/>
    <property type="project" value="InterPro"/>
</dbReference>
<dbReference type="GO" id="GO:0044205">
    <property type="term" value="P:'de novo' UMP biosynthetic process"/>
    <property type="evidence" value="ECO:0007669"/>
    <property type="project" value="UniProtKB-UniRule"/>
</dbReference>
<dbReference type="CDD" id="cd04738">
    <property type="entry name" value="DHOD_2_like"/>
    <property type="match status" value="1"/>
</dbReference>
<dbReference type="FunFam" id="3.20.20.70:FF:000028">
    <property type="entry name" value="Dihydroorotate dehydrogenase (quinone)"/>
    <property type="match status" value="1"/>
</dbReference>
<dbReference type="Gene3D" id="3.20.20.70">
    <property type="entry name" value="Aldolase class I"/>
    <property type="match status" value="1"/>
</dbReference>
<dbReference type="HAMAP" id="MF_00225">
    <property type="entry name" value="DHO_dh_type2"/>
    <property type="match status" value="1"/>
</dbReference>
<dbReference type="InterPro" id="IPR013785">
    <property type="entry name" value="Aldolase_TIM"/>
</dbReference>
<dbReference type="InterPro" id="IPR050074">
    <property type="entry name" value="DHO_dehydrogenase"/>
</dbReference>
<dbReference type="InterPro" id="IPR012135">
    <property type="entry name" value="Dihydroorotate_DH_1_2"/>
</dbReference>
<dbReference type="InterPro" id="IPR005719">
    <property type="entry name" value="Dihydroorotate_DH_2"/>
</dbReference>
<dbReference type="InterPro" id="IPR005720">
    <property type="entry name" value="Dihydroorotate_DH_cat"/>
</dbReference>
<dbReference type="InterPro" id="IPR001295">
    <property type="entry name" value="Dihydroorotate_DH_CS"/>
</dbReference>
<dbReference type="NCBIfam" id="NF003644">
    <property type="entry name" value="PRK05286.1-1"/>
    <property type="match status" value="1"/>
</dbReference>
<dbReference type="NCBIfam" id="NF003645">
    <property type="entry name" value="PRK05286.1-2"/>
    <property type="match status" value="1"/>
</dbReference>
<dbReference type="NCBIfam" id="NF003646">
    <property type="entry name" value="PRK05286.1-4"/>
    <property type="match status" value="1"/>
</dbReference>
<dbReference type="NCBIfam" id="NF003652">
    <property type="entry name" value="PRK05286.2-5"/>
    <property type="match status" value="1"/>
</dbReference>
<dbReference type="NCBIfam" id="TIGR01036">
    <property type="entry name" value="pyrD_sub2"/>
    <property type="match status" value="1"/>
</dbReference>
<dbReference type="PANTHER" id="PTHR48109:SF4">
    <property type="entry name" value="DIHYDROOROTATE DEHYDROGENASE (QUINONE), MITOCHONDRIAL"/>
    <property type="match status" value="1"/>
</dbReference>
<dbReference type="PANTHER" id="PTHR48109">
    <property type="entry name" value="DIHYDROOROTATE DEHYDROGENASE (QUINONE), MITOCHONDRIAL-RELATED"/>
    <property type="match status" value="1"/>
</dbReference>
<dbReference type="Pfam" id="PF01180">
    <property type="entry name" value="DHO_dh"/>
    <property type="match status" value="1"/>
</dbReference>
<dbReference type="PIRSF" id="PIRSF000164">
    <property type="entry name" value="DHO_oxidase"/>
    <property type="match status" value="1"/>
</dbReference>
<dbReference type="SUPFAM" id="SSF51395">
    <property type="entry name" value="FMN-linked oxidoreductases"/>
    <property type="match status" value="1"/>
</dbReference>
<dbReference type="PROSITE" id="PS00911">
    <property type="entry name" value="DHODEHASE_1"/>
    <property type="match status" value="1"/>
</dbReference>
<dbReference type="PROSITE" id="PS00912">
    <property type="entry name" value="DHODEHASE_2"/>
    <property type="match status" value="1"/>
</dbReference>
<feature type="chain" id="PRO_0000148427" description="Dihydroorotate dehydrogenase (quinone)">
    <location>
        <begin position="1"/>
        <end position="336"/>
    </location>
</feature>
<feature type="active site" description="Nucleophile" evidence="1">
    <location>
        <position position="175"/>
    </location>
</feature>
<feature type="binding site" evidence="1">
    <location>
        <begin position="62"/>
        <end position="66"/>
    </location>
    <ligand>
        <name>FMN</name>
        <dbReference type="ChEBI" id="CHEBI:58210"/>
    </ligand>
</feature>
<feature type="binding site" evidence="1">
    <location>
        <position position="66"/>
    </location>
    <ligand>
        <name>substrate</name>
    </ligand>
</feature>
<feature type="binding site" evidence="1">
    <location>
        <position position="86"/>
    </location>
    <ligand>
        <name>FMN</name>
        <dbReference type="ChEBI" id="CHEBI:58210"/>
    </ligand>
</feature>
<feature type="binding site" evidence="1">
    <location>
        <begin position="111"/>
        <end position="115"/>
    </location>
    <ligand>
        <name>substrate</name>
    </ligand>
</feature>
<feature type="binding site" evidence="1">
    <location>
        <position position="139"/>
    </location>
    <ligand>
        <name>FMN</name>
        <dbReference type="ChEBI" id="CHEBI:58210"/>
    </ligand>
</feature>
<feature type="binding site" evidence="1">
    <location>
        <position position="172"/>
    </location>
    <ligand>
        <name>FMN</name>
        <dbReference type="ChEBI" id="CHEBI:58210"/>
    </ligand>
</feature>
<feature type="binding site" evidence="1">
    <location>
        <position position="172"/>
    </location>
    <ligand>
        <name>substrate</name>
    </ligand>
</feature>
<feature type="binding site" evidence="1">
    <location>
        <position position="177"/>
    </location>
    <ligand>
        <name>substrate</name>
    </ligand>
</feature>
<feature type="binding site" evidence="1">
    <location>
        <position position="217"/>
    </location>
    <ligand>
        <name>FMN</name>
        <dbReference type="ChEBI" id="CHEBI:58210"/>
    </ligand>
</feature>
<feature type="binding site" evidence="1">
    <location>
        <position position="245"/>
    </location>
    <ligand>
        <name>FMN</name>
        <dbReference type="ChEBI" id="CHEBI:58210"/>
    </ligand>
</feature>
<feature type="binding site" evidence="1">
    <location>
        <begin position="246"/>
        <end position="247"/>
    </location>
    <ligand>
        <name>substrate</name>
    </ligand>
</feature>
<feature type="binding site" evidence="1">
    <location>
        <position position="268"/>
    </location>
    <ligand>
        <name>FMN</name>
        <dbReference type="ChEBI" id="CHEBI:58210"/>
    </ligand>
</feature>
<feature type="binding site" evidence="1">
    <location>
        <position position="297"/>
    </location>
    <ligand>
        <name>FMN</name>
        <dbReference type="ChEBI" id="CHEBI:58210"/>
    </ligand>
</feature>
<feature type="binding site" evidence="1">
    <location>
        <begin position="318"/>
        <end position="319"/>
    </location>
    <ligand>
        <name>FMN</name>
        <dbReference type="ChEBI" id="CHEBI:58210"/>
    </ligand>
</feature>
<name>PYRD_BUCAP</name>
<protein>
    <recommendedName>
        <fullName evidence="1">Dihydroorotate dehydrogenase (quinone)</fullName>
        <ecNumber evidence="1">1.3.5.2</ecNumber>
    </recommendedName>
    <alternativeName>
        <fullName evidence="1">DHOdehase</fullName>
        <shortName evidence="1">DHOD</shortName>
        <shortName evidence="1">DHODase</shortName>
    </alternativeName>
    <alternativeName>
        <fullName evidence="1">Dihydroorotate oxidase</fullName>
    </alternativeName>
</protein>
<proteinExistence type="inferred from homology"/>
<comment type="function">
    <text evidence="1">Catalyzes the conversion of dihydroorotate to orotate with quinone as electron acceptor.</text>
</comment>
<comment type="catalytic activity">
    <reaction evidence="1">
        <text>(S)-dihydroorotate + a quinone = orotate + a quinol</text>
        <dbReference type="Rhea" id="RHEA:30187"/>
        <dbReference type="ChEBI" id="CHEBI:24646"/>
        <dbReference type="ChEBI" id="CHEBI:30839"/>
        <dbReference type="ChEBI" id="CHEBI:30864"/>
        <dbReference type="ChEBI" id="CHEBI:132124"/>
        <dbReference type="EC" id="1.3.5.2"/>
    </reaction>
</comment>
<comment type="cofactor">
    <cofactor evidence="1">
        <name>FMN</name>
        <dbReference type="ChEBI" id="CHEBI:58210"/>
    </cofactor>
    <text evidence="1">Binds 1 FMN per subunit.</text>
</comment>
<comment type="pathway">
    <text evidence="1">Pyrimidine metabolism; UMP biosynthesis via de novo pathway; orotate from (S)-dihydroorotate (quinone route): step 1/1.</text>
</comment>
<comment type="subunit">
    <text evidence="1">Monomer.</text>
</comment>
<comment type="subcellular location">
    <subcellularLocation>
        <location evidence="1">Cell membrane</location>
        <topology evidence="1">Peripheral membrane protein</topology>
    </subcellularLocation>
</comment>
<comment type="similarity">
    <text evidence="1">Belongs to the dihydroorotate dehydrogenase family. Type 2 subfamily.</text>
</comment>
<evidence type="ECO:0000255" key="1">
    <source>
        <dbReference type="HAMAP-Rule" id="MF_00225"/>
    </source>
</evidence>
<keyword id="KW-1003">Cell membrane</keyword>
<keyword id="KW-0285">Flavoprotein</keyword>
<keyword id="KW-0288">FMN</keyword>
<keyword id="KW-0472">Membrane</keyword>
<keyword id="KW-0560">Oxidoreductase</keyword>
<keyword id="KW-0665">Pyrimidine biosynthesis</keyword>
<gene>
    <name evidence="1" type="primary">pyrD</name>
    <name type="ordered locus">BUsg_350</name>
</gene>
<organism>
    <name type="scientific">Buchnera aphidicola subsp. Schizaphis graminum (strain Sg)</name>
    <dbReference type="NCBI Taxonomy" id="198804"/>
    <lineage>
        <taxon>Bacteria</taxon>
        <taxon>Pseudomonadati</taxon>
        <taxon>Pseudomonadota</taxon>
        <taxon>Gammaproteobacteria</taxon>
        <taxon>Enterobacterales</taxon>
        <taxon>Erwiniaceae</taxon>
        <taxon>Buchnera</taxon>
    </lineage>
</organism>